<keyword id="KW-0010">Activator</keyword>
<keyword id="KW-0238">DNA-binding</keyword>
<keyword id="KW-0426">Late protein</keyword>
<keyword id="KW-1185">Reference proteome</keyword>
<keyword id="KW-0804">Transcription</keyword>
<keyword id="KW-0805">Transcription regulation</keyword>
<dbReference type="EMBL" id="X56951">
    <property type="protein sequence ID" value="CAA40266.1"/>
    <property type="molecule type" value="Genomic_DNA"/>
</dbReference>
<dbReference type="EMBL" id="M95666">
    <property type="protein sequence ID" value="AAA16929.1"/>
    <property type="molecule type" value="Unassigned_DNA"/>
</dbReference>
<dbReference type="EMBL" id="AF234172">
    <property type="protein sequence ID" value="AAQ14078.1"/>
    <property type="molecule type" value="Genomic_DNA"/>
</dbReference>
<dbReference type="PIR" id="B41045">
    <property type="entry name" value="B41045"/>
</dbReference>
<dbReference type="RefSeq" id="YP_006574.1">
    <property type="nucleotide sequence ID" value="NC_005856.1"/>
</dbReference>
<dbReference type="SMR" id="Q06260"/>
<dbReference type="GeneID" id="2777484"/>
<dbReference type="KEGG" id="vg:2777484"/>
<dbReference type="Proteomes" id="UP000008091">
    <property type="component" value="Genome"/>
</dbReference>
<dbReference type="GO" id="GO:0003677">
    <property type="term" value="F:DNA binding"/>
    <property type="evidence" value="ECO:0007669"/>
    <property type="project" value="UniProtKB-KW"/>
</dbReference>
<dbReference type="GO" id="GO:0009058">
    <property type="term" value="P:biosynthetic process"/>
    <property type="evidence" value="ECO:0007669"/>
    <property type="project" value="InterPro"/>
</dbReference>
<dbReference type="InterPro" id="IPR005801">
    <property type="entry name" value="ADC_synthase"/>
</dbReference>
<dbReference type="SUPFAM" id="SSF56322">
    <property type="entry name" value="ADC synthase"/>
    <property type="match status" value="1"/>
</dbReference>
<feature type="chain" id="PRO_0000165284" description="Late promoter-activating protein">
    <location>
        <begin position="1"/>
        <end position="150"/>
    </location>
</feature>
<proteinExistence type="predicted"/>
<organism>
    <name type="scientific">Escherichia phage P1</name>
    <name type="common">Bacteriophage P1</name>
    <dbReference type="NCBI Taxonomy" id="2886926"/>
    <lineage>
        <taxon>Viruses</taxon>
        <taxon>Duplodnaviria</taxon>
        <taxon>Heunggongvirae</taxon>
        <taxon>Uroviricota</taxon>
        <taxon>Caudoviricetes</taxon>
        <taxon>Punavirus</taxon>
        <taxon>Punavirus P1</taxon>
    </lineage>
</organism>
<accession>Q06260</accession>
<comment type="function">
    <text>Trans-activating factor involved in the late regulation of the P1 lytic growth cycle. May be the transcriptional activator of all late P1 functions.</text>
</comment>
<comment type="caution">
    <text evidence="1">It is uncertain whether Met-1 is the initiator.</text>
</comment>
<gene>
    <name type="primary">lpa</name>
    <name type="synonym">10</name>
</gene>
<sequence>MLLNWQGRHFMEINHSRITSYEIADYMIRTKSLLSAKELAAILEKEYPHLDVDKRDVYLRLKAIAVSKYSSVLIDDSTRPRRFQIHSLNPEFFRRSRAPRRFDEKLQNELYMTQDEKERREHQPWVMARQLFNKVARQHRHYGNATSARI</sequence>
<name>LPA_BPP1</name>
<organismHost>
    <name type="scientific">Enterobacteriaceae</name>
    <dbReference type="NCBI Taxonomy" id="543"/>
</organismHost>
<reference key="1">
    <citation type="journal article" date="1991" name="J. Bacteriol.">
        <title>Bacteriophage P1 gene 10 encodes a trans-activating factor required for late gene expression.</title>
        <authorList>
            <person name="Lehnherr H."/>
            <person name="Guidolin A."/>
            <person name="Arber W."/>
        </authorList>
    </citation>
    <scope>NUCLEOTIDE SEQUENCE [GENOMIC DNA]</scope>
</reference>
<reference key="2">
    <citation type="journal article" date="2004" name="J. Bacteriol.">
        <title>Genome of bacteriophage P1.</title>
        <authorList>
            <person name="Lobocka M.B."/>
            <person name="Rose D.J."/>
            <person name="Plunkett G. III"/>
            <person name="Rusin M."/>
            <person name="Samojedny A."/>
            <person name="Lehnherr H."/>
            <person name="Yarmolinsky M.B."/>
            <person name="Blattner F.R."/>
        </authorList>
    </citation>
    <scope>NUCLEOTIDE SEQUENCE [LARGE SCALE GENOMIC DNA]</scope>
</reference>
<evidence type="ECO:0000305" key="1"/>
<protein>
    <recommendedName>
        <fullName>Late promoter-activating protein</fullName>
    </recommendedName>
    <alternativeName>
        <fullName>Gp10</fullName>
    </alternativeName>
</protein>